<organism>
    <name type="scientific">Paracoccus denitrificans</name>
    <dbReference type="NCBI Taxonomy" id="266"/>
    <lineage>
        <taxon>Bacteria</taxon>
        <taxon>Pseudomonadati</taxon>
        <taxon>Pseudomonadota</taxon>
        <taxon>Alphaproteobacteria</taxon>
        <taxon>Rhodobacterales</taxon>
        <taxon>Paracoccaceae</taxon>
        <taxon>Paracoccus</taxon>
    </lineage>
</organism>
<protein>
    <recommendedName>
        <fullName>NADH-quinone oxidoreductase subunit 9</fullName>
        <ecNumber>7.1.1.-</ecNumber>
    </recommendedName>
    <alternativeName>
        <fullName>NADH dehydrogenase I subunit 9</fullName>
    </alternativeName>
    <alternativeName>
        <fullName>NDH-1 subunit 9</fullName>
    </alternativeName>
</protein>
<comment type="function">
    <text>NDH-1 shuttles electrons from NADH, via FMN and iron-sulfur (Fe-S) centers, to quinones in the respiratory chain. The immediate electron acceptor for the enzyme in this species is believed to be ubiquinone. Couples the redox reaction to proton translocation (for every two electrons transferred, four hydrogen ions are translocated across the cytoplasmic membrane), and thus conserves the redox energy in a proton gradient.</text>
</comment>
<comment type="catalytic activity">
    <reaction>
        <text>a quinone + NADH + 5 H(+)(in) = a quinol + NAD(+) + 4 H(+)(out)</text>
        <dbReference type="Rhea" id="RHEA:57888"/>
        <dbReference type="ChEBI" id="CHEBI:15378"/>
        <dbReference type="ChEBI" id="CHEBI:24646"/>
        <dbReference type="ChEBI" id="CHEBI:57540"/>
        <dbReference type="ChEBI" id="CHEBI:57945"/>
        <dbReference type="ChEBI" id="CHEBI:132124"/>
    </reaction>
</comment>
<comment type="cofactor">
    <cofactor evidence="1">
        <name>[4Fe-4S] cluster</name>
        <dbReference type="ChEBI" id="CHEBI:49883"/>
    </cofactor>
    <text evidence="1">Binds 2 [4Fe-4S] clusters per subunit.</text>
</comment>
<comment type="subunit">
    <text>NDH-1 is composed of at least 14 different subunits, Nqo1 to Nqo14. The complex has a L-shaped structure, with the hydrophobic arm (subunits Nqo7, Nqo8, Nqo10 to Nqo14) embedded in the inner membrane and the hydrophilic peripheral arm (subunits Nqo1 to Nqo6, Nqo9) protruding into the bacterial cytoplasm. The hydrophilic domain contains all the redox centers.</text>
</comment>
<comment type="subcellular location">
    <subcellularLocation>
        <location>Cell inner membrane</location>
        <topology>Peripheral membrane protein</topology>
    </subcellularLocation>
</comment>
<comment type="similarity">
    <text evidence="3">Belongs to the complex I 23 kDa subunit family.</text>
</comment>
<accession>P29921</accession>
<sequence>MAFDFARATKYFLMWDFIKGFGLGMRYFVSPKPTLNYPHEKGPLSPRFRGEHALRRYPNGEERCIACKLCEAVCPAQAITIDAERREDGSRRTTRYDIDMTKCIYCGFCQEACPVDAIVEGPNFEYATETREELFYDKQKLLANGERWEAEIARNLQLDAPYR</sequence>
<feature type="chain" id="PRO_0000118720" description="NADH-quinone oxidoreductase subunit 9">
    <location>
        <begin position="1"/>
        <end position="163"/>
    </location>
</feature>
<feature type="domain" description="4Fe-4S ferredoxin-type 1">
    <location>
        <begin position="54"/>
        <end position="84"/>
    </location>
</feature>
<feature type="domain" description="4Fe-4S ferredoxin-type 2">
    <location>
        <begin position="94"/>
        <end position="123"/>
    </location>
</feature>
<feature type="binding site" evidence="1">
    <location>
        <position position="64"/>
    </location>
    <ligand>
        <name>[4Fe-4S] cluster</name>
        <dbReference type="ChEBI" id="CHEBI:49883"/>
        <label>1</label>
    </ligand>
</feature>
<feature type="binding site" evidence="1">
    <location>
        <position position="67"/>
    </location>
    <ligand>
        <name>[4Fe-4S] cluster</name>
        <dbReference type="ChEBI" id="CHEBI:49883"/>
        <label>1</label>
    </ligand>
</feature>
<feature type="binding site" evidence="1">
    <location>
        <position position="70"/>
    </location>
    <ligand>
        <name>[4Fe-4S] cluster</name>
        <dbReference type="ChEBI" id="CHEBI:49883"/>
        <label>1</label>
    </ligand>
</feature>
<feature type="binding site" evidence="1">
    <location>
        <position position="74"/>
    </location>
    <ligand>
        <name>[4Fe-4S] cluster</name>
        <dbReference type="ChEBI" id="CHEBI:49883"/>
        <label>2</label>
    </ligand>
</feature>
<feature type="binding site" evidence="1">
    <location>
        <position position="103"/>
    </location>
    <ligand>
        <name>[4Fe-4S] cluster</name>
        <dbReference type="ChEBI" id="CHEBI:49883"/>
        <label>2</label>
    </ligand>
</feature>
<feature type="binding site" evidence="1">
    <location>
        <position position="106"/>
    </location>
    <ligand>
        <name>[4Fe-4S] cluster</name>
        <dbReference type="ChEBI" id="CHEBI:49883"/>
        <label>2</label>
    </ligand>
</feature>
<feature type="binding site" evidence="1">
    <location>
        <position position="109"/>
    </location>
    <ligand>
        <name>[4Fe-4S] cluster</name>
        <dbReference type="ChEBI" id="CHEBI:49883"/>
        <label>2</label>
    </ligand>
</feature>
<feature type="binding site" evidence="1">
    <location>
        <position position="113"/>
    </location>
    <ligand>
        <name>[4Fe-4S] cluster</name>
        <dbReference type="ChEBI" id="CHEBI:49883"/>
        <label>1</label>
    </ligand>
</feature>
<name>NQO9_PARDE</name>
<proteinExistence type="inferred from homology"/>
<evidence type="ECO:0000250" key="1"/>
<evidence type="ECO:0000303" key="2">
    <source>
    </source>
</evidence>
<evidence type="ECO:0000305" key="3"/>
<keyword id="KW-0004">4Fe-4S</keyword>
<keyword id="KW-0997">Cell inner membrane</keyword>
<keyword id="KW-1003">Cell membrane</keyword>
<keyword id="KW-0408">Iron</keyword>
<keyword id="KW-0411">Iron-sulfur</keyword>
<keyword id="KW-0472">Membrane</keyword>
<keyword id="KW-0479">Metal-binding</keyword>
<keyword id="KW-0520">NAD</keyword>
<keyword id="KW-0874">Quinone</keyword>
<keyword id="KW-0677">Repeat</keyword>
<keyword id="KW-1278">Translocase</keyword>
<keyword id="KW-0830">Ubiquinone</keyword>
<reference key="1">
    <citation type="journal article" date="1993" name="Biochemistry">
        <title>DNA sequencing of the seven remaining structural genes of the gene cluster encoding the energy-transducing NADH-quinone oxidoreductase of Paracoccus denitrificans.</title>
        <authorList>
            <person name="Xu X."/>
            <person name="Matsuno-Yagi A."/>
            <person name="Yagi T."/>
        </authorList>
    </citation>
    <scope>NUCLEOTIDE SEQUENCE [GENOMIC DNA]</scope>
    <source>
        <strain>ATCC 13543 / NRRL B-3784 / NRC 449</strain>
    </source>
</reference>
<gene>
    <name evidence="2" type="primary">nqo9</name>
</gene>
<dbReference type="EC" id="7.1.1.-"/>
<dbReference type="EMBL" id="L02354">
    <property type="protein sequence ID" value="AAA25593.1"/>
    <property type="molecule type" value="Genomic_DNA"/>
</dbReference>
<dbReference type="PIR" id="D45456">
    <property type="entry name" value="D45456"/>
</dbReference>
<dbReference type="SMR" id="P29921"/>
<dbReference type="TCDB" id="3.D.1.2.1">
    <property type="family name" value="the h+ or na+-translocating nadh dehydrogenase (ndh) family"/>
</dbReference>
<dbReference type="GO" id="GO:0005886">
    <property type="term" value="C:plasma membrane"/>
    <property type="evidence" value="ECO:0007669"/>
    <property type="project" value="UniProtKB-SubCell"/>
</dbReference>
<dbReference type="GO" id="GO:0051539">
    <property type="term" value="F:4 iron, 4 sulfur cluster binding"/>
    <property type="evidence" value="ECO:0007669"/>
    <property type="project" value="UniProtKB-KW"/>
</dbReference>
<dbReference type="GO" id="GO:0005506">
    <property type="term" value="F:iron ion binding"/>
    <property type="evidence" value="ECO:0007669"/>
    <property type="project" value="UniProtKB-UniRule"/>
</dbReference>
<dbReference type="GO" id="GO:0050136">
    <property type="term" value="F:NADH:ubiquinone reductase (non-electrogenic) activity"/>
    <property type="evidence" value="ECO:0007669"/>
    <property type="project" value="UniProtKB-UniRule"/>
</dbReference>
<dbReference type="GO" id="GO:0048038">
    <property type="term" value="F:quinone binding"/>
    <property type="evidence" value="ECO:0007669"/>
    <property type="project" value="UniProtKB-KW"/>
</dbReference>
<dbReference type="GO" id="GO:0009060">
    <property type="term" value="P:aerobic respiration"/>
    <property type="evidence" value="ECO:0007669"/>
    <property type="project" value="TreeGrafter"/>
</dbReference>
<dbReference type="FunFam" id="3.30.70.3270:FF:000001">
    <property type="entry name" value="NADH-quinone oxidoreductase subunit I 1"/>
    <property type="match status" value="1"/>
</dbReference>
<dbReference type="Gene3D" id="3.30.70.3270">
    <property type="match status" value="1"/>
</dbReference>
<dbReference type="HAMAP" id="MF_01351">
    <property type="entry name" value="NDH1_NuoI"/>
    <property type="match status" value="1"/>
</dbReference>
<dbReference type="InterPro" id="IPR017896">
    <property type="entry name" value="4Fe4S_Fe-S-bd"/>
</dbReference>
<dbReference type="InterPro" id="IPR017900">
    <property type="entry name" value="4Fe4S_Fe_S_CS"/>
</dbReference>
<dbReference type="InterPro" id="IPR010226">
    <property type="entry name" value="NADH_quinone_OxRdtase_chainI"/>
</dbReference>
<dbReference type="NCBIfam" id="TIGR01971">
    <property type="entry name" value="NuoI"/>
    <property type="match status" value="1"/>
</dbReference>
<dbReference type="NCBIfam" id="NF004538">
    <property type="entry name" value="PRK05888.1-4"/>
    <property type="match status" value="1"/>
</dbReference>
<dbReference type="NCBIfam" id="NF004539">
    <property type="entry name" value="PRK05888.1-5"/>
    <property type="match status" value="1"/>
</dbReference>
<dbReference type="PANTHER" id="PTHR10849:SF20">
    <property type="entry name" value="NADH DEHYDROGENASE [UBIQUINONE] IRON-SULFUR PROTEIN 8, MITOCHONDRIAL"/>
    <property type="match status" value="1"/>
</dbReference>
<dbReference type="PANTHER" id="PTHR10849">
    <property type="entry name" value="NADH DEHYDROGENASE UBIQUINONE IRON-SULFUR PROTEIN 8, MITOCHONDRIAL"/>
    <property type="match status" value="1"/>
</dbReference>
<dbReference type="Pfam" id="PF12838">
    <property type="entry name" value="Fer4_7"/>
    <property type="match status" value="1"/>
</dbReference>
<dbReference type="SUPFAM" id="SSF54862">
    <property type="entry name" value="4Fe-4S ferredoxins"/>
    <property type="match status" value="1"/>
</dbReference>
<dbReference type="PROSITE" id="PS00198">
    <property type="entry name" value="4FE4S_FER_1"/>
    <property type="match status" value="2"/>
</dbReference>
<dbReference type="PROSITE" id="PS51379">
    <property type="entry name" value="4FE4S_FER_2"/>
    <property type="match status" value="2"/>
</dbReference>